<organism>
    <name type="scientific">Agrobacterium fabrum (strain C58 / ATCC 33970)</name>
    <name type="common">Agrobacterium tumefaciens (strain C58)</name>
    <dbReference type="NCBI Taxonomy" id="176299"/>
    <lineage>
        <taxon>Bacteria</taxon>
        <taxon>Pseudomonadati</taxon>
        <taxon>Pseudomonadota</taxon>
        <taxon>Alphaproteobacteria</taxon>
        <taxon>Hyphomicrobiales</taxon>
        <taxon>Rhizobiaceae</taxon>
        <taxon>Rhizobium/Agrobacterium group</taxon>
        <taxon>Agrobacterium</taxon>
        <taxon>Agrobacterium tumefaciens complex</taxon>
    </lineage>
</organism>
<comment type="function">
    <text evidence="1">Catalyzes the 2-thiolation of uridine at the wobble position (U34) of tRNA, leading to the formation of s(2)U34.</text>
</comment>
<comment type="catalytic activity">
    <reaction evidence="1">
        <text>S-sulfanyl-L-cysteinyl-[protein] + uridine(34) in tRNA + AH2 + ATP = 2-thiouridine(34) in tRNA + L-cysteinyl-[protein] + A + AMP + diphosphate + H(+)</text>
        <dbReference type="Rhea" id="RHEA:47032"/>
        <dbReference type="Rhea" id="RHEA-COMP:10131"/>
        <dbReference type="Rhea" id="RHEA-COMP:11726"/>
        <dbReference type="Rhea" id="RHEA-COMP:11727"/>
        <dbReference type="Rhea" id="RHEA-COMP:11728"/>
        <dbReference type="ChEBI" id="CHEBI:13193"/>
        <dbReference type="ChEBI" id="CHEBI:15378"/>
        <dbReference type="ChEBI" id="CHEBI:17499"/>
        <dbReference type="ChEBI" id="CHEBI:29950"/>
        <dbReference type="ChEBI" id="CHEBI:30616"/>
        <dbReference type="ChEBI" id="CHEBI:33019"/>
        <dbReference type="ChEBI" id="CHEBI:61963"/>
        <dbReference type="ChEBI" id="CHEBI:65315"/>
        <dbReference type="ChEBI" id="CHEBI:87170"/>
        <dbReference type="ChEBI" id="CHEBI:456215"/>
        <dbReference type="EC" id="2.8.1.13"/>
    </reaction>
</comment>
<comment type="subcellular location">
    <subcellularLocation>
        <location evidence="1">Cytoplasm</location>
    </subcellularLocation>
</comment>
<comment type="similarity">
    <text evidence="1">Belongs to the MnmA/TRMU family.</text>
</comment>
<comment type="sequence caution" evidence="2">
    <conflict type="erroneous initiation">
        <sequence resource="EMBL-CDS" id="AAK89702"/>
    </conflict>
</comment>
<keyword id="KW-0067">ATP-binding</keyword>
<keyword id="KW-0963">Cytoplasm</keyword>
<keyword id="KW-1015">Disulfide bond</keyword>
<keyword id="KW-0547">Nucleotide-binding</keyword>
<keyword id="KW-1185">Reference proteome</keyword>
<keyword id="KW-0694">RNA-binding</keyword>
<keyword id="KW-0808">Transferase</keyword>
<keyword id="KW-0819">tRNA processing</keyword>
<keyword id="KW-0820">tRNA-binding</keyword>
<evidence type="ECO:0000255" key="1">
    <source>
        <dbReference type="HAMAP-Rule" id="MF_00144"/>
    </source>
</evidence>
<evidence type="ECO:0000305" key="2"/>
<reference key="1">
    <citation type="journal article" date="2001" name="Science">
        <title>The genome of the natural genetic engineer Agrobacterium tumefaciens C58.</title>
        <authorList>
            <person name="Wood D.W."/>
            <person name="Setubal J.C."/>
            <person name="Kaul R."/>
            <person name="Monks D.E."/>
            <person name="Kitajima J.P."/>
            <person name="Okura V.K."/>
            <person name="Zhou Y."/>
            <person name="Chen L."/>
            <person name="Wood G.E."/>
            <person name="Almeida N.F. Jr."/>
            <person name="Woo L."/>
            <person name="Chen Y."/>
            <person name="Paulsen I.T."/>
            <person name="Eisen J.A."/>
            <person name="Karp P.D."/>
            <person name="Bovee D. Sr."/>
            <person name="Chapman P."/>
            <person name="Clendenning J."/>
            <person name="Deatherage G."/>
            <person name="Gillet W."/>
            <person name="Grant C."/>
            <person name="Kutyavin T."/>
            <person name="Levy R."/>
            <person name="Li M.-J."/>
            <person name="McClelland E."/>
            <person name="Palmieri A."/>
            <person name="Raymond C."/>
            <person name="Rouse G."/>
            <person name="Saenphimmachak C."/>
            <person name="Wu Z."/>
            <person name="Romero P."/>
            <person name="Gordon D."/>
            <person name="Zhang S."/>
            <person name="Yoo H."/>
            <person name="Tao Y."/>
            <person name="Biddle P."/>
            <person name="Jung M."/>
            <person name="Krespan W."/>
            <person name="Perry M."/>
            <person name="Gordon-Kamm B."/>
            <person name="Liao L."/>
            <person name="Kim S."/>
            <person name="Hendrick C."/>
            <person name="Zhao Z.-Y."/>
            <person name="Dolan M."/>
            <person name="Chumley F."/>
            <person name="Tingey S.V."/>
            <person name="Tomb J.-F."/>
            <person name="Gordon M.P."/>
            <person name="Olson M.V."/>
            <person name="Nester E.W."/>
        </authorList>
    </citation>
    <scope>NUCLEOTIDE SEQUENCE [LARGE SCALE GENOMIC DNA]</scope>
    <source>
        <strain>C58 / ATCC 33970</strain>
    </source>
</reference>
<reference key="2">
    <citation type="journal article" date="2001" name="Science">
        <title>Genome sequence of the plant pathogen and biotechnology agent Agrobacterium tumefaciens C58.</title>
        <authorList>
            <person name="Goodner B."/>
            <person name="Hinkle G."/>
            <person name="Gattung S."/>
            <person name="Miller N."/>
            <person name="Blanchard M."/>
            <person name="Qurollo B."/>
            <person name="Goldman B.S."/>
            <person name="Cao Y."/>
            <person name="Askenazi M."/>
            <person name="Halling C."/>
            <person name="Mullin L."/>
            <person name="Houmiel K."/>
            <person name="Gordon J."/>
            <person name="Vaudin M."/>
            <person name="Iartchouk O."/>
            <person name="Epp A."/>
            <person name="Liu F."/>
            <person name="Wollam C."/>
            <person name="Allinger M."/>
            <person name="Doughty D."/>
            <person name="Scott C."/>
            <person name="Lappas C."/>
            <person name="Markelz B."/>
            <person name="Flanagan C."/>
            <person name="Crowell C."/>
            <person name="Gurson J."/>
            <person name="Lomo C."/>
            <person name="Sear C."/>
            <person name="Strub G."/>
            <person name="Cielo C."/>
            <person name="Slater S."/>
        </authorList>
    </citation>
    <scope>NUCLEOTIDE SEQUENCE [LARGE SCALE GENOMIC DNA]</scope>
    <source>
        <strain>C58 / ATCC 33970</strain>
    </source>
</reference>
<sequence length="398" mass="43044">MNTLDFDKRPEDTRIVVAMSGGVDSSVVAGILKREGYDVLGITLQLYDHGAAVHRAGSCCAGQDIDDARRVCETLGIPHYVLDYEARFRETVINPFAEAYAMGETPIPCVACNQTVKFADLLATAQELGADALATGHYIRSRPNPVSGQPGRRALYRPIDSDRDQSWFLFATTQEQIDYLRFPLGGLSKAETRALAEEMGLVVAKKADSQDICFVPQGKYTDIINKLKPNAALAGDIVHLDGRVLGRHDGIVHYTIGQRRGIGVATGEPLYVVHLDARGRRVIVGPREALETRRVYLRDMNWLGDGALAADAGQGFTCFAKVRSTRPPTEAVLHADENGIYVDLMTGEAGVAPGQACVLYSAPGPDARVYGGGFIDRSERSVDAEASLKALLEKPVAA</sequence>
<feature type="chain" id="PRO_0000121599" description="tRNA-specific 2-thiouridylase MnmA">
    <location>
        <begin position="1"/>
        <end position="398"/>
    </location>
</feature>
<feature type="region of interest" description="Interaction with tRNA" evidence="1">
    <location>
        <begin position="163"/>
        <end position="165"/>
    </location>
</feature>
<feature type="active site" description="Nucleophile" evidence="1">
    <location>
        <position position="112"/>
    </location>
</feature>
<feature type="active site" description="Cysteine persulfide intermediate" evidence="1">
    <location>
        <position position="213"/>
    </location>
</feature>
<feature type="binding site" evidence="1">
    <location>
        <begin position="18"/>
        <end position="25"/>
    </location>
    <ligand>
        <name>ATP</name>
        <dbReference type="ChEBI" id="CHEBI:30616"/>
    </ligand>
</feature>
<feature type="binding site" evidence="1">
    <location>
        <position position="44"/>
    </location>
    <ligand>
        <name>ATP</name>
        <dbReference type="ChEBI" id="CHEBI:30616"/>
    </ligand>
</feature>
<feature type="binding site" evidence="1">
    <location>
        <position position="136"/>
    </location>
    <ligand>
        <name>ATP</name>
        <dbReference type="ChEBI" id="CHEBI:30616"/>
    </ligand>
</feature>
<feature type="site" description="Interaction with tRNA" evidence="1">
    <location>
        <position position="137"/>
    </location>
</feature>
<feature type="site" description="Interaction with tRNA" evidence="1">
    <location>
        <position position="355"/>
    </location>
</feature>
<feature type="disulfide bond" description="Alternate" evidence="1">
    <location>
        <begin position="112"/>
        <end position="213"/>
    </location>
</feature>
<name>MNMA_AGRFC</name>
<proteinExistence type="inferred from homology"/>
<dbReference type="EC" id="2.8.1.13" evidence="1"/>
<dbReference type="EMBL" id="AE007870">
    <property type="protein sequence ID" value="AAK89702.2"/>
    <property type="status" value="ALT_INIT"/>
    <property type="molecule type" value="Genomic_DNA"/>
</dbReference>
<dbReference type="PIR" id="D98272">
    <property type="entry name" value="D98272"/>
</dbReference>
<dbReference type="RefSeq" id="NP_356917.2">
    <property type="nucleotide sequence ID" value="NC_003063.2"/>
</dbReference>
<dbReference type="RefSeq" id="WP_035258161.1">
    <property type="nucleotide sequence ID" value="NC_003063.2"/>
</dbReference>
<dbReference type="SMR" id="Q8U9M5"/>
<dbReference type="STRING" id="176299.Atu3703"/>
<dbReference type="EnsemblBacteria" id="AAK89702">
    <property type="protein sequence ID" value="AAK89702"/>
    <property type="gene ID" value="Atu3703"/>
</dbReference>
<dbReference type="GeneID" id="1135577"/>
<dbReference type="KEGG" id="atu:Atu3703"/>
<dbReference type="PATRIC" id="fig|176299.10.peg.3535"/>
<dbReference type="eggNOG" id="COG0482">
    <property type="taxonomic scope" value="Bacteria"/>
</dbReference>
<dbReference type="HOGENOM" id="CLU_035188_0_1_5"/>
<dbReference type="OrthoDB" id="9800696at2"/>
<dbReference type="Proteomes" id="UP000000813">
    <property type="component" value="Chromosome linear"/>
</dbReference>
<dbReference type="GO" id="GO:0005737">
    <property type="term" value="C:cytoplasm"/>
    <property type="evidence" value="ECO:0007669"/>
    <property type="project" value="UniProtKB-SubCell"/>
</dbReference>
<dbReference type="GO" id="GO:0005524">
    <property type="term" value="F:ATP binding"/>
    <property type="evidence" value="ECO:0007669"/>
    <property type="project" value="UniProtKB-KW"/>
</dbReference>
<dbReference type="GO" id="GO:0000049">
    <property type="term" value="F:tRNA binding"/>
    <property type="evidence" value="ECO:0007669"/>
    <property type="project" value="UniProtKB-KW"/>
</dbReference>
<dbReference type="GO" id="GO:0103016">
    <property type="term" value="F:tRNA-uridine 2-sulfurtransferase activity"/>
    <property type="evidence" value="ECO:0007669"/>
    <property type="project" value="UniProtKB-EC"/>
</dbReference>
<dbReference type="GO" id="GO:0002143">
    <property type="term" value="P:tRNA wobble position uridine thiolation"/>
    <property type="evidence" value="ECO:0007669"/>
    <property type="project" value="TreeGrafter"/>
</dbReference>
<dbReference type="CDD" id="cd01998">
    <property type="entry name" value="MnmA_TRMU-like"/>
    <property type="match status" value="1"/>
</dbReference>
<dbReference type="FunFam" id="2.30.30.280:FF:000001">
    <property type="entry name" value="tRNA-specific 2-thiouridylase MnmA"/>
    <property type="match status" value="1"/>
</dbReference>
<dbReference type="FunFam" id="3.40.50.620:FF:000115">
    <property type="entry name" value="tRNA-specific 2-thiouridylase MnmA"/>
    <property type="match status" value="1"/>
</dbReference>
<dbReference type="Gene3D" id="2.30.30.280">
    <property type="entry name" value="Adenine nucleotide alpha hydrolases-like domains"/>
    <property type="match status" value="1"/>
</dbReference>
<dbReference type="Gene3D" id="3.40.50.620">
    <property type="entry name" value="HUPs"/>
    <property type="match status" value="1"/>
</dbReference>
<dbReference type="Gene3D" id="2.40.30.10">
    <property type="entry name" value="Translation factors"/>
    <property type="match status" value="1"/>
</dbReference>
<dbReference type="HAMAP" id="MF_00144">
    <property type="entry name" value="tRNA_thiouridyl_MnmA"/>
    <property type="match status" value="1"/>
</dbReference>
<dbReference type="InterPro" id="IPR004506">
    <property type="entry name" value="MnmA-like"/>
</dbReference>
<dbReference type="InterPro" id="IPR046885">
    <property type="entry name" value="MnmA-like_C"/>
</dbReference>
<dbReference type="InterPro" id="IPR046884">
    <property type="entry name" value="MnmA-like_central"/>
</dbReference>
<dbReference type="InterPro" id="IPR023382">
    <property type="entry name" value="MnmA-like_central_sf"/>
</dbReference>
<dbReference type="InterPro" id="IPR014729">
    <property type="entry name" value="Rossmann-like_a/b/a_fold"/>
</dbReference>
<dbReference type="NCBIfam" id="NF001138">
    <property type="entry name" value="PRK00143.1"/>
    <property type="match status" value="1"/>
</dbReference>
<dbReference type="NCBIfam" id="TIGR00420">
    <property type="entry name" value="trmU"/>
    <property type="match status" value="1"/>
</dbReference>
<dbReference type="PANTHER" id="PTHR11933:SF5">
    <property type="entry name" value="MITOCHONDRIAL TRNA-SPECIFIC 2-THIOURIDYLASE 1"/>
    <property type="match status" value="1"/>
</dbReference>
<dbReference type="PANTHER" id="PTHR11933">
    <property type="entry name" value="TRNA 5-METHYLAMINOMETHYL-2-THIOURIDYLATE -METHYLTRANSFERASE"/>
    <property type="match status" value="1"/>
</dbReference>
<dbReference type="Pfam" id="PF03054">
    <property type="entry name" value="tRNA_Me_trans"/>
    <property type="match status" value="1"/>
</dbReference>
<dbReference type="Pfam" id="PF20258">
    <property type="entry name" value="tRNA_Me_trans_C"/>
    <property type="match status" value="1"/>
</dbReference>
<dbReference type="Pfam" id="PF20259">
    <property type="entry name" value="tRNA_Me_trans_M"/>
    <property type="match status" value="1"/>
</dbReference>
<dbReference type="SUPFAM" id="SSF52402">
    <property type="entry name" value="Adenine nucleotide alpha hydrolases-like"/>
    <property type="match status" value="1"/>
</dbReference>
<accession>Q8U9M5</accession>
<gene>
    <name evidence="1" type="primary">mnmA</name>
    <name type="synonym">trmU</name>
    <name type="ordered locus">Atu3703</name>
    <name type="ORF">AGR_L_2270</name>
</gene>
<protein>
    <recommendedName>
        <fullName evidence="1">tRNA-specific 2-thiouridylase MnmA</fullName>
        <ecNumber evidence="1">2.8.1.13</ecNumber>
    </recommendedName>
</protein>